<dbReference type="EMBL" id="CP000255">
    <property type="protein sequence ID" value="ABD20436.1"/>
    <property type="molecule type" value="Genomic_DNA"/>
</dbReference>
<dbReference type="RefSeq" id="WP_000090796.1">
    <property type="nucleotide sequence ID" value="NZ_CP027476.1"/>
</dbReference>
<dbReference type="SMR" id="Q2FER3"/>
<dbReference type="GeneID" id="66840438"/>
<dbReference type="KEGG" id="saa:SAUSA300_2180"/>
<dbReference type="HOGENOM" id="CLU_103849_1_1_9"/>
<dbReference type="OMA" id="MNVKRLM"/>
<dbReference type="Proteomes" id="UP000001939">
    <property type="component" value="Chromosome"/>
</dbReference>
<dbReference type="GO" id="GO:0005829">
    <property type="term" value="C:cytosol"/>
    <property type="evidence" value="ECO:0007669"/>
    <property type="project" value="TreeGrafter"/>
</dbReference>
<dbReference type="GO" id="GO:0015935">
    <property type="term" value="C:small ribosomal subunit"/>
    <property type="evidence" value="ECO:0007669"/>
    <property type="project" value="TreeGrafter"/>
</dbReference>
<dbReference type="GO" id="GO:0019843">
    <property type="term" value="F:rRNA binding"/>
    <property type="evidence" value="ECO:0007669"/>
    <property type="project" value="UniProtKB-UniRule"/>
</dbReference>
<dbReference type="GO" id="GO:0003735">
    <property type="term" value="F:structural constituent of ribosome"/>
    <property type="evidence" value="ECO:0007669"/>
    <property type="project" value="InterPro"/>
</dbReference>
<dbReference type="GO" id="GO:0000049">
    <property type="term" value="F:tRNA binding"/>
    <property type="evidence" value="ECO:0007669"/>
    <property type="project" value="UniProtKB-UniRule"/>
</dbReference>
<dbReference type="GO" id="GO:0006412">
    <property type="term" value="P:translation"/>
    <property type="evidence" value="ECO:0007669"/>
    <property type="project" value="UniProtKB-UniRule"/>
</dbReference>
<dbReference type="FunFam" id="1.10.8.50:FF:000001">
    <property type="entry name" value="30S ribosomal protein S13"/>
    <property type="match status" value="1"/>
</dbReference>
<dbReference type="FunFam" id="4.10.910.10:FF:000001">
    <property type="entry name" value="30S ribosomal protein S13"/>
    <property type="match status" value="1"/>
</dbReference>
<dbReference type="Gene3D" id="1.10.8.50">
    <property type="match status" value="1"/>
</dbReference>
<dbReference type="Gene3D" id="4.10.910.10">
    <property type="entry name" value="30s ribosomal protein s13, domain 2"/>
    <property type="match status" value="1"/>
</dbReference>
<dbReference type="HAMAP" id="MF_01315">
    <property type="entry name" value="Ribosomal_uS13"/>
    <property type="match status" value="1"/>
</dbReference>
<dbReference type="InterPro" id="IPR027437">
    <property type="entry name" value="Rbsml_uS13_C"/>
</dbReference>
<dbReference type="InterPro" id="IPR001892">
    <property type="entry name" value="Ribosomal_uS13"/>
</dbReference>
<dbReference type="InterPro" id="IPR010979">
    <property type="entry name" value="Ribosomal_uS13-like_H2TH"/>
</dbReference>
<dbReference type="InterPro" id="IPR019980">
    <property type="entry name" value="Ribosomal_uS13_bac-type"/>
</dbReference>
<dbReference type="InterPro" id="IPR018269">
    <property type="entry name" value="Ribosomal_uS13_CS"/>
</dbReference>
<dbReference type="NCBIfam" id="TIGR03631">
    <property type="entry name" value="uS13_bact"/>
    <property type="match status" value="1"/>
</dbReference>
<dbReference type="PANTHER" id="PTHR10871">
    <property type="entry name" value="30S RIBOSOMAL PROTEIN S13/40S RIBOSOMAL PROTEIN S18"/>
    <property type="match status" value="1"/>
</dbReference>
<dbReference type="PANTHER" id="PTHR10871:SF1">
    <property type="entry name" value="SMALL RIBOSOMAL SUBUNIT PROTEIN US13M"/>
    <property type="match status" value="1"/>
</dbReference>
<dbReference type="Pfam" id="PF00416">
    <property type="entry name" value="Ribosomal_S13"/>
    <property type="match status" value="1"/>
</dbReference>
<dbReference type="PIRSF" id="PIRSF002134">
    <property type="entry name" value="Ribosomal_S13"/>
    <property type="match status" value="1"/>
</dbReference>
<dbReference type="SUPFAM" id="SSF46946">
    <property type="entry name" value="S13-like H2TH domain"/>
    <property type="match status" value="1"/>
</dbReference>
<dbReference type="PROSITE" id="PS00646">
    <property type="entry name" value="RIBOSOMAL_S13_1"/>
    <property type="match status" value="1"/>
</dbReference>
<dbReference type="PROSITE" id="PS50159">
    <property type="entry name" value="RIBOSOMAL_S13_2"/>
    <property type="match status" value="1"/>
</dbReference>
<proteinExistence type="inferred from homology"/>
<reference key="1">
    <citation type="journal article" date="2006" name="Lancet">
        <title>Complete genome sequence of USA300, an epidemic clone of community-acquired meticillin-resistant Staphylococcus aureus.</title>
        <authorList>
            <person name="Diep B.A."/>
            <person name="Gill S.R."/>
            <person name="Chang R.F."/>
            <person name="Phan T.H."/>
            <person name="Chen J.H."/>
            <person name="Davidson M.G."/>
            <person name="Lin F."/>
            <person name="Lin J."/>
            <person name="Carleton H.A."/>
            <person name="Mongodin E.F."/>
            <person name="Sensabaugh G.F."/>
            <person name="Perdreau-Remington F."/>
        </authorList>
    </citation>
    <scope>NUCLEOTIDE SEQUENCE [LARGE SCALE GENOMIC DNA]</scope>
    <source>
        <strain>USA300</strain>
    </source>
</reference>
<organism>
    <name type="scientific">Staphylococcus aureus (strain USA300)</name>
    <dbReference type="NCBI Taxonomy" id="367830"/>
    <lineage>
        <taxon>Bacteria</taxon>
        <taxon>Bacillati</taxon>
        <taxon>Bacillota</taxon>
        <taxon>Bacilli</taxon>
        <taxon>Bacillales</taxon>
        <taxon>Staphylococcaceae</taxon>
        <taxon>Staphylococcus</taxon>
    </lineage>
</organism>
<name>RS13_STAA3</name>
<protein>
    <recommendedName>
        <fullName evidence="1">Small ribosomal subunit protein uS13</fullName>
    </recommendedName>
    <alternativeName>
        <fullName evidence="3">30S ribosomal protein S13</fullName>
    </alternativeName>
</protein>
<sequence>MARIAGVDIPREKRVVISLTYIYGIGTSTAQKILEEANVSADTRVKDLTDDELGRIREVVDGYKVEGDLRRETNLNIKRLMEISSYRGIRHRRGLPVRGQKTKNNARTRKGPVKTVANKKK</sequence>
<gene>
    <name evidence="1" type="primary">rpsM</name>
    <name type="ordered locus">SAUSA300_2180</name>
</gene>
<feature type="chain" id="PRO_0000306716" description="Small ribosomal subunit protein uS13">
    <location>
        <begin position="1"/>
        <end position="121"/>
    </location>
</feature>
<feature type="region of interest" description="Disordered" evidence="2">
    <location>
        <begin position="91"/>
        <end position="121"/>
    </location>
</feature>
<evidence type="ECO:0000255" key="1">
    <source>
        <dbReference type="HAMAP-Rule" id="MF_01315"/>
    </source>
</evidence>
<evidence type="ECO:0000256" key="2">
    <source>
        <dbReference type="SAM" id="MobiDB-lite"/>
    </source>
</evidence>
<evidence type="ECO:0000305" key="3"/>
<accession>Q2FER3</accession>
<keyword id="KW-0687">Ribonucleoprotein</keyword>
<keyword id="KW-0689">Ribosomal protein</keyword>
<keyword id="KW-0694">RNA-binding</keyword>
<keyword id="KW-0699">rRNA-binding</keyword>
<keyword id="KW-0820">tRNA-binding</keyword>
<comment type="function">
    <text evidence="1">Located at the top of the head of the 30S subunit, it contacts several helices of the 16S rRNA. In the 70S ribosome it contacts the 23S rRNA (bridge B1a) and protein L5 of the 50S subunit (bridge B1b), connecting the 2 subunits; these bridges are implicated in subunit movement. Contacts the tRNAs in the A and P-sites.</text>
</comment>
<comment type="subunit">
    <text evidence="1">Part of the 30S ribosomal subunit. Forms a loose heterodimer with protein S19. Forms two bridges to the 50S subunit in the 70S ribosome.</text>
</comment>
<comment type="similarity">
    <text evidence="1">Belongs to the universal ribosomal protein uS13 family.</text>
</comment>